<protein>
    <recommendedName>
        <fullName evidence="1">Aspartate--tRNA ligase</fullName>
        <ecNumber evidence="1">6.1.1.12</ecNumber>
    </recommendedName>
    <alternativeName>
        <fullName evidence="1">Aspartyl-tRNA synthetase</fullName>
        <shortName evidence="1">AspRS</shortName>
    </alternativeName>
</protein>
<gene>
    <name evidence="1" type="primary">aspS</name>
    <name type="ordered locus">SAOUHSC_01737</name>
</gene>
<reference key="1">
    <citation type="book" date="2006" name="Gram positive pathogens, 2nd edition">
        <title>The Staphylococcus aureus NCTC 8325 genome.</title>
        <editorList>
            <person name="Fischetti V."/>
            <person name="Novick R."/>
            <person name="Ferretti J."/>
            <person name="Portnoy D."/>
            <person name="Rood J."/>
        </editorList>
        <authorList>
            <person name="Gillaspy A.F."/>
            <person name="Worrell V."/>
            <person name="Orvis J."/>
            <person name="Roe B.A."/>
            <person name="Dyer D.W."/>
            <person name="Iandolo J.J."/>
        </authorList>
    </citation>
    <scope>NUCLEOTIDE SEQUENCE [LARGE SCALE GENOMIC DNA]</scope>
    <source>
        <strain>NCTC 8325 / PS 47</strain>
    </source>
</reference>
<proteinExistence type="inferred from homology"/>
<evidence type="ECO:0000255" key="1">
    <source>
        <dbReference type="HAMAP-Rule" id="MF_00044"/>
    </source>
</evidence>
<organism>
    <name type="scientific">Staphylococcus aureus (strain NCTC 8325 / PS 47)</name>
    <dbReference type="NCBI Taxonomy" id="93061"/>
    <lineage>
        <taxon>Bacteria</taxon>
        <taxon>Bacillati</taxon>
        <taxon>Bacillota</taxon>
        <taxon>Bacilli</taxon>
        <taxon>Bacillales</taxon>
        <taxon>Staphylococcaceae</taxon>
        <taxon>Staphylococcus</taxon>
    </lineage>
</organism>
<dbReference type="EC" id="6.1.1.12" evidence="1"/>
<dbReference type="EMBL" id="CP000253">
    <property type="protein sequence ID" value="ABD30809.1"/>
    <property type="molecule type" value="Genomic_DNA"/>
</dbReference>
<dbReference type="RefSeq" id="WP_000044800.1">
    <property type="nucleotide sequence ID" value="NZ_LS483365.1"/>
</dbReference>
<dbReference type="RefSeq" id="YP_500245.1">
    <property type="nucleotide sequence ID" value="NC_007795.1"/>
</dbReference>
<dbReference type="SMR" id="Q2FXU5"/>
<dbReference type="STRING" id="93061.SAOUHSC_01737"/>
<dbReference type="PaxDb" id="1280-SAXN108_1657"/>
<dbReference type="GeneID" id="3921086"/>
<dbReference type="KEGG" id="sao:SAOUHSC_01737"/>
<dbReference type="PATRIC" id="fig|93061.5.peg.1583"/>
<dbReference type="eggNOG" id="COG0173">
    <property type="taxonomic scope" value="Bacteria"/>
</dbReference>
<dbReference type="HOGENOM" id="CLU_014330_3_2_9"/>
<dbReference type="OrthoDB" id="9802326at2"/>
<dbReference type="PRO" id="PR:Q2FXU5"/>
<dbReference type="Proteomes" id="UP000008816">
    <property type="component" value="Chromosome"/>
</dbReference>
<dbReference type="GO" id="GO:0005737">
    <property type="term" value="C:cytoplasm"/>
    <property type="evidence" value="ECO:0007669"/>
    <property type="project" value="UniProtKB-SubCell"/>
</dbReference>
<dbReference type="GO" id="GO:0004815">
    <property type="term" value="F:aspartate-tRNA ligase activity"/>
    <property type="evidence" value="ECO:0000318"/>
    <property type="project" value="GO_Central"/>
</dbReference>
<dbReference type="GO" id="GO:0005524">
    <property type="term" value="F:ATP binding"/>
    <property type="evidence" value="ECO:0007669"/>
    <property type="project" value="UniProtKB-UniRule"/>
</dbReference>
<dbReference type="GO" id="GO:0140096">
    <property type="term" value="F:catalytic activity, acting on a protein"/>
    <property type="evidence" value="ECO:0007669"/>
    <property type="project" value="UniProtKB-ARBA"/>
</dbReference>
<dbReference type="GO" id="GO:0003676">
    <property type="term" value="F:nucleic acid binding"/>
    <property type="evidence" value="ECO:0007669"/>
    <property type="project" value="InterPro"/>
</dbReference>
<dbReference type="GO" id="GO:0016740">
    <property type="term" value="F:transferase activity"/>
    <property type="evidence" value="ECO:0007669"/>
    <property type="project" value="UniProtKB-ARBA"/>
</dbReference>
<dbReference type="GO" id="GO:0006422">
    <property type="term" value="P:aspartyl-tRNA aminoacylation"/>
    <property type="evidence" value="ECO:0000318"/>
    <property type="project" value="GO_Central"/>
</dbReference>
<dbReference type="CDD" id="cd00777">
    <property type="entry name" value="AspRS_core"/>
    <property type="match status" value="1"/>
</dbReference>
<dbReference type="CDD" id="cd04317">
    <property type="entry name" value="EcAspRS_like_N"/>
    <property type="match status" value="1"/>
</dbReference>
<dbReference type="Gene3D" id="3.30.930.10">
    <property type="entry name" value="Bira Bifunctional Protein, Domain 2"/>
    <property type="match status" value="1"/>
</dbReference>
<dbReference type="Gene3D" id="3.30.1360.30">
    <property type="entry name" value="GAD-like domain"/>
    <property type="match status" value="1"/>
</dbReference>
<dbReference type="Gene3D" id="2.40.50.140">
    <property type="entry name" value="Nucleic acid-binding proteins"/>
    <property type="match status" value="1"/>
</dbReference>
<dbReference type="HAMAP" id="MF_00044">
    <property type="entry name" value="Asp_tRNA_synth_type1"/>
    <property type="match status" value="1"/>
</dbReference>
<dbReference type="InterPro" id="IPR004364">
    <property type="entry name" value="Aa-tRNA-synt_II"/>
</dbReference>
<dbReference type="InterPro" id="IPR006195">
    <property type="entry name" value="aa-tRNA-synth_II"/>
</dbReference>
<dbReference type="InterPro" id="IPR045864">
    <property type="entry name" value="aa-tRNA-synth_II/BPL/LPL"/>
</dbReference>
<dbReference type="InterPro" id="IPR004524">
    <property type="entry name" value="Asp-tRNA-ligase_1"/>
</dbReference>
<dbReference type="InterPro" id="IPR047089">
    <property type="entry name" value="Asp-tRNA-ligase_1_N"/>
</dbReference>
<dbReference type="InterPro" id="IPR002312">
    <property type="entry name" value="Asp/Asn-tRNA-synth_IIb"/>
</dbReference>
<dbReference type="InterPro" id="IPR047090">
    <property type="entry name" value="AspRS_core"/>
</dbReference>
<dbReference type="InterPro" id="IPR004115">
    <property type="entry name" value="GAD-like_sf"/>
</dbReference>
<dbReference type="InterPro" id="IPR029351">
    <property type="entry name" value="GAD_dom"/>
</dbReference>
<dbReference type="InterPro" id="IPR012340">
    <property type="entry name" value="NA-bd_OB-fold"/>
</dbReference>
<dbReference type="InterPro" id="IPR004365">
    <property type="entry name" value="NA-bd_OB_tRNA"/>
</dbReference>
<dbReference type="NCBIfam" id="TIGR00459">
    <property type="entry name" value="aspS_bact"/>
    <property type="match status" value="1"/>
</dbReference>
<dbReference type="NCBIfam" id="NF001750">
    <property type="entry name" value="PRK00476.1"/>
    <property type="match status" value="1"/>
</dbReference>
<dbReference type="PANTHER" id="PTHR22594:SF5">
    <property type="entry name" value="ASPARTATE--TRNA LIGASE, MITOCHONDRIAL"/>
    <property type="match status" value="1"/>
</dbReference>
<dbReference type="PANTHER" id="PTHR22594">
    <property type="entry name" value="ASPARTYL/LYSYL-TRNA SYNTHETASE"/>
    <property type="match status" value="1"/>
</dbReference>
<dbReference type="Pfam" id="PF02938">
    <property type="entry name" value="GAD"/>
    <property type="match status" value="1"/>
</dbReference>
<dbReference type="Pfam" id="PF00152">
    <property type="entry name" value="tRNA-synt_2"/>
    <property type="match status" value="1"/>
</dbReference>
<dbReference type="Pfam" id="PF01336">
    <property type="entry name" value="tRNA_anti-codon"/>
    <property type="match status" value="1"/>
</dbReference>
<dbReference type="PRINTS" id="PR01042">
    <property type="entry name" value="TRNASYNTHASP"/>
</dbReference>
<dbReference type="SUPFAM" id="SSF55681">
    <property type="entry name" value="Class II aaRS and biotin synthetases"/>
    <property type="match status" value="1"/>
</dbReference>
<dbReference type="SUPFAM" id="SSF55261">
    <property type="entry name" value="GAD domain-like"/>
    <property type="match status" value="1"/>
</dbReference>
<dbReference type="SUPFAM" id="SSF50249">
    <property type="entry name" value="Nucleic acid-binding proteins"/>
    <property type="match status" value="1"/>
</dbReference>
<dbReference type="PROSITE" id="PS50862">
    <property type="entry name" value="AA_TRNA_LIGASE_II"/>
    <property type="match status" value="1"/>
</dbReference>
<accession>Q2FXU5</accession>
<sequence>MSKRTTYCGLVTEAFLGQEITLKGWVNNRRDLGGLIFVDLRDREGIVQVVFNPAFSEEALKIAETVRSEYVVEVQGTVTKRDPETVNPKIKTGQVEVQVTNIKVINKSETPPFSINEENVNVDENIRLKYRYLDLRRQELAQTFKMRHQITRSIRQYLDDEGFFDIETPVLTKSTPEGARDYLVPSRVHDGEFYALPQSPQLFKQLLMISGFDKYYQIVKCFRDEDLRADRQPEFTQVDIEMSFVDQEDVMQMGEEMLKKVVKEVKGVEINGAFPRMTYKEAMRRYGSDKPDTRFEMELIDVSQLGRDMDFKVFKDTVENDGEIKAIVAKGAAEQYTRKDMDALTEFVNIYGAKGLAWVKVVEDGLTGPIGRFFETENVETLLTLTGAEAGDLVMFVADKPNVVAQSLGALRVKLAKELGLIDETKLNFLWVTDWPLLEYDEDAKRYVAAHHPFTSPKEADIAKLGTAPEEAEANAYDIVLNGYELGGGSIRIHDGELQEKMFEVLGFTKEQAQEQFGFLLDAFKYGAPPHGGIALGLDRLVMLLTNRTNLRDTIAFPKTASATCLLTNAPSEVSDKQLEELSLRIRH</sequence>
<keyword id="KW-0030">Aminoacyl-tRNA synthetase</keyword>
<keyword id="KW-0067">ATP-binding</keyword>
<keyword id="KW-0963">Cytoplasm</keyword>
<keyword id="KW-0436">Ligase</keyword>
<keyword id="KW-0547">Nucleotide-binding</keyword>
<keyword id="KW-0648">Protein biosynthesis</keyword>
<keyword id="KW-1185">Reference proteome</keyword>
<feature type="chain" id="PRO_1000006767" description="Aspartate--tRNA ligase">
    <location>
        <begin position="1"/>
        <end position="588"/>
    </location>
</feature>
<feature type="region of interest" description="Aspartate" evidence="1">
    <location>
        <begin position="201"/>
        <end position="204"/>
    </location>
</feature>
<feature type="binding site" evidence="1">
    <location>
        <position position="177"/>
    </location>
    <ligand>
        <name>L-aspartate</name>
        <dbReference type="ChEBI" id="CHEBI:29991"/>
    </ligand>
</feature>
<feature type="binding site" evidence="1">
    <location>
        <begin position="223"/>
        <end position="225"/>
    </location>
    <ligand>
        <name>ATP</name>
        <dbReference type="ChEBI" id="CHEBI:30616"/>
    </ligand>
</feature>
<feature type="binding site" evidence="1">
    <location>
        <position position="223"/>
    </location>
    <ligand>
        <name>L-aspartate</name>
        <dbReference type="ChEBI" id="CHEBI:29991"/>
    </ligand>
</feature>
<feature type="binding site" evidence="1">
    <location>
        <position position="232"/>
    </location>
    <ligand>
        <name>ATP</name>
        <dbReference type="ChEBI" id="CHEBI:30616"/>
    </ligand>
</feature>
<feature type="binding site" evidence="1">
    <location>
        <position position="451"/>
    </location>
    <ligand>
        <name>L-aspartate</name>
        <dbReference type="ChEBI" id="CHEBI:29991"/>
    </ligand>
</feature>
<feature type="binding site" evidence="1">
    <location>
        <position position="485"/>
    </location>
    <ligand>
        <name>ATP</name>
        <dbReference type="ChEBI" id="CHEBI:30616"/>
    </ligand>
</feature>
<feature type="binding site" evidence="1">
    <location>
        <position position="492"/>
    </location>
    <ligand>
        <name>L-aspartate</name>
        <dbReference type="ChEBI" id="CHEBI:29991"/>
    </ligand>
</feature>
<feature type="binding site" evidence="1">
    <location>
        <begin position="537"/>
        <end position="540"/>
    </location>
    <ligand>
        <name>ATP</name>
        <dbReference type="ChEBI" id="CHEBI:30616"/>
    </ligand>
</feature>
<comment type="function">
    <text evidence="1">Catalyzes the attachment of L-aspartate to tRNA(Asp) in a two-step reaction: L-aspartate is first activated by ATP to form Asp-AMP and then transferred to the acceptor end of tRNA(Asp).</text>
</comment>
<comment type="catalytic activity">
    <reaction evidence="1">
        <text>tRNA(Asp) + L-aspartate + ATP = L-aspartyl-tRNA(Asp) + AMP + diphosphate</text>
        <dbReference type="Rhea" id="RHEA:19649"/>
        <dbReference type="Rhea" id="RHEA-COMP:9660"/>
        <dbReference type="Rhea" id="RHEA-COMP:9678"/>
        <dbReference type="ChEBI" id="CHEBI:29991"/>
        <dbReference type="ChEBI" id="CHEBI:30616"/>
        <dbReference type="ChEBI" id="CHEBI:33019"/>
        <dbReference type="ChEBI" id="CHEBI:78442"/>
        <dbReference type="ChEBI" id="CHEBI:78516"/>
        <dbReference type="ChEBI" id="CHEBI:456215"/>
        <dbReference type="EC" id="6.1.1.12"/>
    </reaction>
</comment>
<comment type="subunit">
    <text evidence="1">Homodimer.</text>
</comment>
<comment type="subcellular location">
    <subcellularLocation>
        <location evidence="1">Cytoplasm</location>
    </subcellularLocation>
</comment>
<comment type="similarity">
    <text evidence="1">Belongs to the class-II aminoacyl-tRNA synthetase family. Type 1 subfamily.</text>
</comment>
<name>SYD_STAA8</name>